<proteinExistence type="inferred from homology"/>
<comment type="catalytic activity">
    <reaction evidence="1">
        <text>L-glutamine + H2O = L-glutamate + NH4(+)</text>
        <dbReference type="Rhea" id="RHEA:15889"/>
        <dbReference type="ChEBI" id="CHEBI:15377"/>
        <dbReference type="ChEBI" id="CHEBI:28938"/>
        <dbReference type="ChEBI" id="CHEBI:29985"/>
        <dbReference type="ChEBI" id="CHEBI:58359"/>
        <dbReference type="EC" id="3.5.1.2"/>
    </reaction>
</comment>
<comment type="subunit">
    <text evidence="1">Homotetramer.</text>
</comment>
<comment type="similarity">
    <text evidence="1">Belongs to the glutaminase family.</text>
</comment>
<reference key="1">
    <citation type="submission" date="2008-12" db="EMBL/GenBank/DDBJ databases">
        <title>Complete sequence of chromosome of Methylobacterium chloromethanicum CM4.</title>
        <authorList>
            <consortium name="US DOE Joint Genome Institute"/>
            <person name="Lucas S."/>
            <person name="Copeland A."/>
            <person name="Lapidus A."/>
            <person name="Glavina del Rio T."/>
            <person name="Dalin E."/>
            <person name="Tice H."/>
            <person name="Bruce D."/>
            <person name="Goodwin L."/>
            <person name="Pitluck S."/>
            <person name="Chertkov O."/>
            <person name="Brettin T."/>
            <person name="Detter J.C."/>
            <person name="Han C."/>
            <person name="Larimer F."/>
            <person name="Land M."/>
            <person name="Hauser L."/>
            <person name="Kyrpides N."/>
            <person name="Mikhailova N."/>
            <person name="Marx C."/>
            <person name="Richardson P."/>
        </authorList>
    </citation>
    <scope>NUCLEOTIDE SEQUENCE [LARGE SCALE GENOMIC DNA]</scope>
    <source>
        <strain>CM4 / NCIMB 13688</strain>
    </source>
</reference>
<protein>
    <recommendedName>
        <fullName evidence="1">Glutaminase</fullName>
        <ecNumber evidence="1">3.5.1.2</ecNumber>
    </recommendedName>
</protein>
<feature type="chain" id="PRO_1000132907" description="Glutaminase">
    <location>
        <begin position="1"/>
        <end position="309"/>
    </location>
</feature>
<feature type="binding site" evidence="1">
    <location>
        <position position="64"/>
    </location>
    <ligand>
        <name>substrate</name>
    </ligand>
</feature>
<feature type="binding site" evidence="1">
    <location>
        <position position="114"/>
    </location>
    <ligand>
        <name>substrate</name>
    </ligand>
</feature>
<feature type="binding site" evidence="1">
    <location>
        <position position="160"/>
    </location>
    <ligand>
        <name>substrate</name>
    </ligand>
</feature>
<feature type="binding site" evidence="1">
    <location>
        <position position="167"/>
    </location>
    <ligand>
        <name>substrate</name>
    </ligand>
</feature>
<feature type="binding site" evidence="1">
    <location>
        <position position="191"/>
    </location>
    <ligand>
        <name>substrate</name>
    </ligand>
</feature>
<feature type="binding site" evidence="1">
    <location>
        <position position="243"/>
    </location>
    <ligand>
        <name>substrate</name>
    </ligand>
</feature>
<feature type="binding site" evidence="1">
    <location>
        <position position="261"/>
    </location>
    <ligand>
        <name>substrate</name>
    </ligand>
</feature>
<keyword id="KW-0378">Hydrolase</keyword>
<dbReference type="EC" id="3.5.1.2" evidence="1"/>
<dbReference type="EMBL" id="CP001298">
    <property type="protein sequence ID" value="ACK83492.1"/>
    <property type="molecule type" value="Genomic_DNA"/>
</dbReference>
<dbReference type="RefSeq" id="WP_015951002.1">
    <property type="nucleotide sequence ID" value="NC_011757.1"/>
</dbReference>
<dbReference type="SMR" id="B7KNQ3"/>
<dbReference type="KEGG" id="mch:Mchl_2652"/>
<dbReference type="HOGENOM" id="CLU_027932_1_1_5"/>
<dbReference type="Proteomes" id="UP000002385">
    <property type="component" value="Chromosome"/>
</dbReference>
<dbReference type="GO" id="GO:0004359">
    <property type="term" value="F:glutaminase activity"/>
    <property type="evidence" value="ECO:0007669"/>
    <property type="project" value="UniProtKB-UniRule"/>
</dbReference>
<dbReference type="GO" id="GO:0006537">
    <property type="term" value="P:glutamate biosynthetic process"/>
    <property type="evidence" value="ECO:0007669"/>
    <property type="project" value="TreeGrafter"/>
</dbReference>
<dbReference type="GO" id="GO:0006543">
    <property type="term" value="P:glutamine catabolic process"/>
    <property type="evidence" value="ECO:0007669"/>
    <property type="project" value="TreeGrafter"/>
</dbReference>
<dbReference type="FunFam" id="3.40.710.10:FF:000005">
    <property type="entry name" value="Glutaminase"/>
    <property type="match status" value="1"/>
</dbReference>
<dbReference type="Gene3D" id="3.40.710.10">
    <property type="entry name" value="DD-peptidase/beta-lactamase superfamily"/>
    <property type="match status" value="1"/>
</dbReference>
<dbReference type="HAMAP" id="MF_00313">
    <property type="entry name" value="Glutaminase"/>
    <property type="match status" value="1"/>
</dbReference>
<dbReference type="InterPro" id="IPR012338">
    <property type="entry name" value="Beta-lactam/transpept-like"/>
</dbReference>
<dbReference type="InterPro" id="IPR015868">
    <property type="entry name" value="Glutaminase"/>
</dbReference>
<dbReference type="NCBIfam" id="TIGR03814">
    <property type="entry name" value="Gln_ase"/>
    <property type="match status" value="1"/>
</dbReference>
<dbReference type="NCBIfam" id="NF002133">
    <property type="entry name" value="PRK00971.1-2"/>
    <property type="match status" value="1"/>
</dbReference>
<dbReference type="PANTHER" id="PTHR12544">
    <property type="entry name" value="GLUTAMINASE"/>
    <property type="match status" value="1"/>
</dbReference>
<dbReference type="PANTHER" id="PTHR12544:SF29">
    <property type="entry name" value="GLUTAMINASE"/>
    <property type="match status" value="1"/>
</dbReference>
<dbReference type="Pfam" id="PF04960">
    <property type="entry name" value="Glutaminase"/>
    <property type="match status" value="1"/>
</dbReference>
<dbReference type="SUPFAM" id="SSF56601">
    <property type="entry name" value="beta-lactamase/transpeptidase-like"/>
    <property type="match status" value="1"/>
</dbReference>
<evidence type="ECO:0000255" key="1">
    <source>
        <dbReference type="HAMAP-Rule" id="MF_00313"/>
    </source>
</evidence>
<gene>
    <name evidence="1" type="primary">glsA</name>
    <name type="ordered locus">Mchl_2652</name>
</gene>
<sequence length="309" mass="33059">MPDLESIVKDIAAEMRARPDRGAVASYIPELARVDAQGFGLVVIDGEGRVAAGGDADTPFSIQSISKVFTLTLALGMVGDRLWRRVGREPSGSPFNSIVQLEREHGIPRNPFINAGAIAVTDLILSGHQPREALGEILRFMQFVAQDDSITIDERVAASEKRTGFRNAALANYMRSFDVIENPVDYTLGVYFHHCAIAMTCRQLATAGLFLAYSGHHPLAGHSVISAERARRINAIMLTCGHYDGSGDFAYRVGLPGKSGVGGGILAVAPGKASICVWSPGLDAAGNSHLGRIALEMLVKRTGWSIFGV</sequence>
<accession>B7KNQ3</accession>
<organism>
    <name type="scientific">Methylorubrum extorquens (strain CM4 / NCIMB 13688)</name>
    <name type="common">Methylobacterium extorquens</name>
    <dbReference type="NCBI Taxonomy" id="440085"/>
    <lineage>
        <taxon>Bacteria</taxon>
        <taxon>Pseudomonadati</taxon>
        <taxon>Pseudomonadota</taxon>
        <taxon>Alphaproteobacteria</taxon>
        <taxon>Hyphomicrobiales</taxon>
        <taxon>Methylobacteriaceae</taxon>
        <taxon>Methylorubrum</taxon>
    </lineage>
</organism>
<name>GLSA_METC4</name>